<evidence type="ECO:0000255" key="1">
    <source>
        <dbReference type="HAMAP-Rule" id="MF_01653"/>
    </source>
</evidence>
<sequence length="314" mass="34274">MHAYLHCLSHSPLVGYVDPAQEVLDEVNGVIASARERIAAFSPELVVLFAPDHYNGFFYDVMPPFCLGVGATAIGDFGSAAGELPVPVELAEACAHAVMKSGIDLAVSYCMQVDHGFAQPLEFLLGGLYKVPVLPVFINGVATPLPGFQRTRMLGEAIGRFTSTLNKRVLFLGSGGLSHQPPVPELAKADAHMRDRLLGSGKDLPASERELRQQRVISAAEKFVEDQRTLHPLNPIWDNQFMTLLEQGRIQELDAVSNEELSAIAGKSTHEIKTWVAAFAAISTFGNWRSEGRYYRPIPEWIAGFGSLSARTEN</sequence>
<name>MHPB_ECO55</name>
<accession>B7L504</accession>
<proteinExistence type="inferred from homology"/>
<feature type="chain" id="PRO_1000187000" description="2,3-dihydroxyphenylpropionate/2,3-dihydroxicinnamic acid 1,2-dioxygenase">
    <location>
        <begin position="1"/>
        <end position="314"/>
    </location>
</feature>
<feature type="active site" description="Proton donor" evidence="1">
    <location>
        <position position="115"/>
    </location>
</feature>
<feature type="active site" description="Proton acceptor" evidence="1">
    <location>
        <position position="179"/>
    </location>
</feature>
<organism>
    <name type="scientific">Escherichia coli (strain 55989 / EAEC)</name>
    <dbReference type="NCBI Taxonomy" id="585055"/>
    <lineage>
        <taxon>Bacteria</taxon>
        <taxon>Pseudomonadati</taxon>
        <taxon>Pseudomonadota</taxon>
        <taxon>Gammaproteobacteria</taxon>
        <taxon>Enterobacterales</taxon>
        <taxon>Enterobacteriaceae</taxon>
        <taxon>Escherichia</taxon>
    </lineage>
</organism>
<protein>
    <recommendedName>
        <fullName evidence="1">2,3-dihydroxyphenylpropionate/2,3-dihydroxicinnamic acid 1,2-dioxygenase</fullName>
        <ecNumber evidence="1">1.13.11.16</ecNumber>
    </recommendedName>
    <alternativeName>
        <fullName evidence="1">3-carboxyethylcatechol 2,3-dioxygenase</fullName>
    </alternativeName>
</protein>
<dbReference type="EC" id="1.13.11.16" evidence="1"/>
<dbReference type="EMBL" id="CU928145">
    <property type="protein sequence ID" value="CAU96232.1"/>
    <property type="molecule type" value="Genomic_DNA"/>
</dbReference>
<dbReference type="RefSeq" id="WP_000543465.1">
    <property type="nucleotide sequence ID" value="NC_011748.1"/>
</dbReference>
<dbReference type="SMR" id="B7L504"/>
<dbReference type="KEGG" id="eck:EC55989_0355"/>
<dbReference type="HOGENOM" id="CLU_078149_0_0_6"/>
<dbReference type="UniPathway" id="UPA00714"/>
<dbReference type="Proteomes" id="UP000000746">
    <property type="component" value="Chromosome"/>
</dbReference>
<dbReference type="GO" id="GO:0047070">
    <property type="term" value="F:3-carboxyethylcatechol 2,3-dioxygenase activity"/>
    <property type="evidence" value="ECO:0007669"/>
    <property type="project" value="UniProtKB-UniRule"/>
</dbReference>
<dbReference type="GO" id="GO:0008198">
    <property type="term" value="F:ferrous iron binding"/>
    <property type="evidence" value="ECO:0007669"/>
    <property type="project" value="InterPro"/>
</dbReference>
<dbReference type="GO" id="GO:0019380">
    <property type="term" value="P:3-phenylpropionate catabolic process"/>
    <property type="evidence" value="ECO:0007669"/>
    <property type="project" value="UniProtKB-UniRule"/>
</dbReference>
<dbReference type="CDD" id="cd07365">
    <property type="entry name" value="MhpB_like"/>
    <property type="match status" value="1"/>
</dbReference>
<dbReference type="Gene3D" id="3.40.830.10">
    <property type="entry name" value="LigB-like"/>
    <property type="match status" value="1"/>
</dbReference>
<dbReference type="HAMAP" id="MF_01653">
    <property type="entry name" value="MhpB"/>
    <property type="match status" value="1"/>
</dbReference>
<dbReference type="InterPro" id="IPR023789">
    <property type="entry name" value="DHPP/DHXA_dioxygenase"/>
</dbReference>
<dbReference type="InterPro" id="IPR004183">
    <property type="entry name" value="Xdiol_dOase_suB"/>
</dbReference>
<dbReference type="NCBIfam" id="NF009907">
    <property type="entry name" value="PRK13370.1-1"/>
    <property type="match status" value="1"/>
</dbReference>
<dbReference type="NCBIfam" id="NF009910">
    <property type="entry name" value="PRK13370.1-4"/>
    <property type="match status" value="1"/>
</dbReference>
<dbReference type="Pfam" id="PF02900">
    <property type="entry name" value="LigB"/>
    <property type="match status" value="1"/>
</dbReference>
<dbReference type="SUPFAM" id="SSF53213">
    <property type="entry name" value="LigB-like"/>
    <property type="match status" value="1"/>
</dbReference>
<comment type="function">
    <text evidence="1">Catalyzes the non-heme iron(II)-dependent oxidative cleavage of 2,3-dihydroxyphenylpropionic acid and 2,3-dihydroxicinnamic acid into 2-hydroxy-6-ketononadienedioate and 2-hydroxy-6-ketononatrienedioate, respectively.</text>
</comment>
<comment type="catalytic activity">
    <reaction evidence="1">
        <text>3-(2,3-dihydroxyphenyl)propanoate + O2 = (2Z,4E)-2-hydroxy-6-oxonona-2,4-dienedioate + H(+)</text>
        <dbReference type="Rhea" id="RHEA:23840"/>
        <dbReference type="ChEBI" id="CHEBI:15378"/>
        <dbReference type="ChEBI" id="CHEBI:15379"/>
        <dbReference type="ChEBI" id="CHEBI:46951"/>
        <dbReference type="ChEBI" id="CHEBI:66887"/>
        <dbReference type="EC" id="1.13.11.16"/>
    </reaction>
</comment>
<comment type="catalytic activity">
    <reaction evidence="1">
        <text>(2E)-3-(2,3-dihydroxyphenyl)prop-2-enoate + O2 = (2Z,4E,7E)-2-hydroxy-6-oxonona-2,4,7-trienedioate + H(+)</text>
        <dbReference type="Rhea" id="RHEA:25054"/>
        <dbReference type="ChEBI" id="CHEBI:15378"/>
        <dbReference type="ChEBI" id="CHEBI:15379"/>
        <dbReference type="ChEBI" id="CHEBI:58642"/>
        <dbReference type="ChEBI" id="CHEBI:66888"/>
        <dbReference type="EC" id="1.13.11.16"/>
    </reaction>
</comment>
<comment type="cofactor">
    <cofactor evidence="1">
        <name>Fe(2+)</name>
        <dbReference type="ChEBI" id="CHEBI:29033"/>
    </cofactor>
</comment>
<comment type="pathway">
    <text evidence="1">Aromatic compound metabolism; 3-phenylpropanoate degradation.</text>
</comment>
<comment type="subunit">
    <text evidence="1">Homotetramer.</text>
</comment>
<comment type="similarity">
    <text evidence="1">Belongs to the LigB/MhpB extradiol dioxygenase family.</text>
</comment>
<keyword id="KW-0058">Aromatic hydrocarbons catabolism</keyword>
<keyword id="KW-0223">Dioxygenase</keyword>
<keyword id="KW-0408">Iron</keyword>
<keyword id="KW-0560">Oxidoreductase</keyword>
<keyword id="KW-1185">Reference proteome</keyword>
<reference key="1">
    <citation type="journal article" date="2009" name="PLoS Genet.">
        <title>Organised genome dynamics in the Escherichia coli species results in highly diverse adaptive paths.</title>
        <authorList>
            <person name="Touchon M."/>
            <person name="Hoede C."/>
            <person name="Tenaillon O."/>
            <person name="Barbe V."/>
            <person name="Baeriswyl S."/>
            <person name="Bidet P."/>
            <person name="Bingen E."/>
            <person name="Bonacorsi S."/>
            <person name="Bouchier C."/>
            <person name="Bouvet O."/>
            <person name="Calteau A."/>
            <person name="Chiapello H."/>
            <person name="Clermont O."/>
            <person name="Cruveiller S."/>
            <person name="Danchin A."/>
            <person name="Diard M."/>
            <person name="Dossat C."/>
            <person name="Karoui M.E."/>
            <person name="Frapy E."/>
            <person name="Garry L."/>
            <person name="Ghigo J.M."/>
            <person name="Gilles A.M."/>
            <person name="Johnson J."/>
            <person name="Le Bouguenec C."/>
            <person name="Lescat M."/>
            <person name="Mangenot S."/>
            <person name="Martinez-Jehanne V."/>
            <person name="Matic I."/>
            <person name="Nassif X."/>
            <person name="Oztas S."/>
            <person name="Petit M.A."/>
            <person name="Pichon C."/>
            <person name="Rouy Z."/>
            <person name="Ruf C.S."/>
            <person name="Schneider D."/>
            <person name="Tourret J."/>
            <person name="Vacherie B."/>
            <person name="Vallenet D."/>
            <person name="Medigue C."/>
            <person name="Rocha E.P.C."/>
            <person name="Denamur E."/>
        </authorList>
    </citation>
    <scope>NUCLEOTIDE SEQUENCE [LARGE SCALE GENOMIC DNA]</scope>
    <source>
        <strain>55989 / EAEC</strain>
    </source>
</reference>
<gene>
    <name evidence="1" type="primary">mhpB</name>
    <name type="ordered locus">EC55989_0355</name>
</gene>